<protein>
    <recommendedName>
        <fullName evidence="1">Phosphoribosylformylglycinamidine cyclo-ligase</fullName>
        <ecNumber evidence="1">6.3.3.1</ecNumber>
    </recommendedName>
    <alternativeName>
        <fullName evidence="1">AIR synthase</fullName>
    </alternativeName>
    <alternativeName>
        <fullName evidence="1">AIRS</fullName>
    </alternativeName>
    <alternativeName>
        <fullName evidence="1">Phosphoribosyl-aminoimidazole synthetase</fullName>
    </alternativeName>
</protein>
<feature type="chain" id="PRO_1000148288" description="Phosphoribosylformylglycinamidine cyclo-ligase">
    <location>
        <begin position="1"/>
        <end position="356"/>
    </location>
</feature>
<proteinExistence type="inferred from homology"/>
<reference key="1">
    <citation type="submission" date="2006-03" db="EMBL/GenBank/DDBJ databases">
        <title>Complete sequence of chromosome of Nitrobacter hamburgensis X14.</title>
        <authorList>
            <consortium name="US DOE Joint Genome Institute"/>
            <person name="Copeland A."/>
            <person name="Lucas S."/>
            <person name="Lapidus A."/>
            <person name="Barry K."/>
            <person name="Detter J.C."/>
            <person name="Glavina del Rio T."/>
            <person name="Hammon N."/>
            <person name="Israni S."/>
            <person name="Dalin E."/>
            <person name="Tice H."/>
            <person name="Pitluck S."/>
            <person name="Chain P."/>
            <person name="Malfatti S."/>
            <person name="Shin M."/>
            <person name="Vergez L."/>
            <person name="Schmutz J."/>
            <person name="Larimer F."/>
            <person name="Land M."/>
            <person name="Hauser L."/>
            <person name="Kyrpides N."/>
            <person name="Ivanova N."/>
            <person name="Ward B."/>
            <person name="Arp D."/>
            <person name="Klotz M."/>
            <person name="Stein L."/>
            <person name="O'Mullan G."/>
            <person name="Starkenburg S."/>
            <person name="Sayavedra L."/>
            <person name="Poret-Peterson A.T."/>
            <person name="Gentry M.E."/>
            <person name="Bruce D."/>
            <person name="Richardson P."/>
        </authorList>
    </citation>
    <scope>NUCLEOTIDE SEQUENCE [LARGE SCALE GENOMIC DNA]</scope>
    <source>
        <strain>DSM 10229 / NCIMB 13809 / X14</strain>
    </source>
</reference>
<evidence type="ECO:0000255" key="1">
    <source>
        <dbReference type="HAMAP-Rule" id="MF_00741"/>
    </source>
</evidence>
<sequence>MTDRKNGLTYADAGVDIDAGNRLVDLIKPMVRATARAGADAEIGGFGGLFDLKAAGFTDPVLVAANDGVGTKVKIAIETGIHDTIGIDLVAMSVNDLVVQGAEPLFFLDYFACGKLDPEVASAIVAGIAVGCREAGCALIGGETAEMPGLYKDGDYDLAGFAVGAAERGTLLPGRDIAAGDAVIGLASSGVHSNGYSLVRKIVEASGLGFSVPAPFAPVTTLGGALLTPTRLYVKSCLRAIRETGAVKGLAHITGGGFTDNIPRVLPKHLGIRIDLSRLTVLPVFKWLARQGGIAELELLRTFNCGVGMIAIVRRDAVEQVVDVLTQAGERVAPLGSVIEASGDRVVYDNHLDLAM</sequence>
<keyword id="KW-0067">ATP-binding</keyword>
<keyword id="KW-0963">Cytoplasm</keyword>
<keyword id="KW-0436">Ligase</keyword>
<keyword id="KW-0547">Nucleotide-binding</keyword>
<keyword id="KW-0658">Purine biosynthesis</keyword>
<keyword id="KW-1185">Reference proteome</keyword>
<gene>
    <name evidence="1" type="primary">purM</name>
    <name type="ordered locus">Nham_2118</name>
</gene>
<organism>
    <name type="scientific">Nitrobacter hamburgensis (strain DSM 10229 / NCIMB 13809 / X14)</name>
    <dbReference type="NCBI Taxonomy" id="323097"/>
    <lineage>
        <taxon>Bacteria</taxon>
        <taxon>Pseudomonadati</taxon>
        <taxon>Pseudomonadota</taxon>
        <taxon>Alphaproteobacteria</taxon>
        <taxon>Hyphomicrobiales</taxon>
        <taxon>Nitrobacteraceae</taxon>
        <taxon>Nitrobacter</taxon>
    </lineage>
</organism>
<name>PUR5_NITHX</name>
<comment type="catalytic activity">
    <reaction evidence="1">
        <text>2-formamido-N(1)-(5-O-phospho-beta-D-ribosyl)acetamidine + ATP = 5-amino-1-(5-phospho-beta-D-ribosyl)imidazole + ADP + phosphate + H(+)</text>
        <dbReference type="Rhea" id="RHEA:23032"/>
        <dbReference type="ChEBI" id="CHEBI:15378"/>
        <dbReference type="ChEBI" id="CHEBI:30616"/>
        <dbReference type="ChEBI" id="CHEBI:43474"/>
        <dbReference type="ChEBI" id="CHEBI:137981"/>
        <dbReference type="ChEBI" id="CHEBI:147287"/>
        <dbReference type="ChEBI" id="CHEBI:456216"/>
        <dbReference type="EC" id="6.3.3.1"/>
    </reaction>
</comment>
<comment type="pathway">
    <text evidence="1">Purine metabolism; IMP biosynthesis via de novo pathway; 5-amino-1-(5-phospho-D-ribosyl)imidazole from N(2)-formyl-N(1)-(5-phospho-D-ribosyl)glycinamide: step 2/2.</text>
</comment>
<comment type="subcellular location">
    <subcellularLocation>
        <location evidence="1">Cytoplasm</location>
    </subcellularLocation>
</comment>
<comment type="similarity">
    <text evidence="1">Belongs to the AIR synthase family.</text>
</comment>
<dbReference type="EC" id="6.3.3.1" evidence="1"/>
<dbReference type="EMBL" id="CP000319">
    <property type="protein sequence ID" value="ABE62915.1"/>
    <property type="molecule type" value="Genomic_DNA"/>
</dbReference>
<dbReference type="RefSeq" id="WP_011510594.1">
    <property type="nucleotide sequence ID" value="NC_007964.1"/>
</dbReference>
<dbReference type="SMR" id="Q1QLI2"/>
<dbReference type="STRING" id="323097.Nham_2118"/>
<dbReference type="KEGG" id="nha:Nham_2118"/>
<dbReference type="eggNOG" id="COG0150">
    <property type="taxonomic scope" value="Bacteria"/>
</dbReference>
<dbReference type="HOGENOM" id="CLU_047116_0_0_5"/>
<dbReference type="OrthoDB" id="9777881at2"/>
<dbReference type="UniPathway" id="UPA00074">
    <property type="reaction ID" value="UER00129"/>
</dbReference>
<dbReference type="Proteomes" id="UP000001953">
    <property type="component" value="Chromosome"/>
</dbReference>
<dbReference type="GO" id="GO:0005829">
    <property type="term" value="C:cytosol"/>
    <property type="evidence" value="ECO:0007669"/>
    <property type="project" value="TreeGrafter"/>
</dbReference>
<dbReference type="GO" id="GO:0005524">
    <property type="term" value="F:ATP binding"/>
    <property type="evidence" value="ECO:0007669"/>
    <property type="project" value="UniProtKB-KW"/>
</dbReference>
<dbReference type="GO" id="GO:0004637">
    <property type="term" value="F:phosphoribosylamine-glycine ligase activity"/>
    <property type="evidence" value="ECO:0007669"/>
    <property type="project" value="TreeGrafter"/>
</dbReference>
<dbReference type="GO" id="GO:0004641">
    <property type="term" value="F:phosphoribosylformylglycinamidine cyclo-ligase activity"/>
    <property type="evidence" value="ECO:0007669"/>
    <property type="project" value="UniProtKB-UniRule"/>
</dbReference>
<dbReference type="GO" id="GO:0006189">
    <property type="term" value="P:'de novo' IMP biosynthetic process"/>
    <property type="evidence" value="ECO:0007669"/>
    <property type="project" value="UniProtKB-UniRule"/>
</dbReference>
<dbReference type="GO" id="GO:0046084">
    <property type="term" value="P:adenine biosynthetic process"/>
    <property type="evidence" value="ECO:0007669"/>
    <property type="project" value="TreeGrafter"/>
</dbReference>
<dbReference type="CDD" id="cd02196">
    <property type="entry name" value="PurM"/>
    <property type="match status" value="1"/>
</dbReference>
<dbReference type="FunFam" id="3.30.1330.10:FF:000001">
    <property type="entry name" value="Phosphoribosylformylglycinamidine cyclo-ligase"/>
    <property type="match status" value="1"/>
</dbReference>
<dbReference type="FunFam" id="3.90.650.10:FF:000011">
    <property type="entry name" value="Phosphoribosylformylglycinamidine cyclo-ligase"/>
    <property type="match status" value="1"/>
</dbReference>
<dbReference type="Gene3D" id="3.90.650.10">
    <property type="entry name" value="PurM-like C-terminal domain"/>
    <property type="match status" value="1"/>
</dbReference>
<dbReference type="Gene3D" id="3.30.1330.10">
    <property type="entry name" value="PurM-like, N-terminal domain"/>
    <property type="match status" value="1"/>
</dbReference>
<dbReference type="HAMAP" id="MF_00741">
    <property type="entry name" value="AIRS"/>
    <property type="match status" value="1"/>
</dbReference>
<dbReference type="InterPro" id="IPR010918">
    <property type="entry name" value="PurM-like_C_dom"/>
</dbReference>
<dbReference type="InterPro" id="IPR036676">
    <property type="entry name" value="PurM-like_C_sf"/>
</dbReference>
<dbReference type="InterPro" id="IPR016188">
    <property type="entry name" value="PurM-like_N"/>
</dbReference>
<dbReference type="InterPro" id="IPR036921">
    <property type="entry name" value="PurM-like_N_sf"/>
</dbReference>
<dbReference type="InterPro" id="IPR004733">
    <property type="entry name" value="PurM_cligase"/>
</dbReference>
<dbReference type="NCBIfam" id="TIGR00878">
    <property type="entry name" value="purM"/>
    <property type="match status" value="1"/>
</dbReference>
<dbReference type="PANTHER" id="PTHR10520:SF12">
    <property type="entry name" value="TRIFUNCTIONAL PURINE BIOSYNTHETIC PROTEIN ADENOSINE-3"/>
    <property type="match status" value="1"/>
</dbReference>
<dbReference type="PANTHER" id="PTHR10520">
    <property type="entry name" value="TRIFUNCTIONAL PURINE BIOSYNTHETIC PROTEIN ADENOSINE-3-RELATED"/>
    <property type="match status" value="1"/>
</dbReference>
<dbReference type="Pfam" id="PF00586">
    <property type="entry name" value="AIRS"/>
    <property type="match status" value="1"/>
</dbReference>
<dbReference type="Pfam" id="PF02769">
    <property type="entry name" value="AIRS_C"/>
    <property type="match status" value="1"/>
</dbReference>
<dbReference type="SUPFAM" id="SSF56042">
    <property type="entry name" value="PurM C-terminal domain-like"/>
    <property type="match status" value="1"/>
</dbReference>
<dbReference type="SUPFAM" id="SSF55326">
    <property type="entry name" value="PurM N-terminal domain-like"/>
    <property type="match status" value="1"/>
</dbReference>
<accession>Q1QLI2</accession>